<organism>
    <name type="scientific">Arabidopsis thaliana</name>
    <name type="common">Mouse-ear cress</name>
    <dbReference type="NCBI Taxonomy" id="3702"/>
    <lineage>
        <taxon>Eukaryota</taxon>
        <taxon>Viridiplantae</taxon>
        <taxon>Streptophyta</taxon>
        <taxon>Embryophyta</taxon>
        <taxon>Tracheophyta</taxon>
        <taxon>Spermatophyta</taxon>
        <taxon>Magnoliopsida</taxon>
        <taxon>eudicotyledons</taxon>
        <taxon>Gunneridae</taxon>
        <taxon>Pentapetalae</taxon>
        <taxon>rosids</taxon>
        <taxon>malvids</taxon>
        <taxon>Brassicales</taxon>
        <taxon>Brassicaceae</taxon>
        <taxon>Camelineae</taxon>
        <taxon>Arabidopsis</taxon>
    </lineage>
</organism>
<gene>
    <name type="primary">CYP71B34</name>
    <name type="ordered locus">At3g26300</name>
    <name type="ORF">F20C19.2</name>
</gene>
<feature type="chain" id="PRO_0000052108" description="Cytochrome P450 71B34">
    <location>
        <begin position="1"/>
        <end position="500"/>
    </location>
</feature>
<feature type="transmembrane region" description="Helical" evidence="2">
    <location>
        <begin position="1"/>
        <end position="21"/>
    </location>
</feature>
<feature type="binding site" description="axial binding residue" evidence="1">
    <location>
        <position position="440"/>
    </location>
    <ligand>
        <name>heme</name>
        <dbReference type="ChEBI" id="CHEBI:30413"/>
    </ligand>
    <ligandPart>
        <name>Fe</name>
        <dbReference type="ChEBI" id="CHEBI:18248"/>
    </ligandPart>
</feature>
<feature type="splice variant" id="VSP_037990" description="In isoform 2." evidence="3">
    <original>DVLLAGMDTSAITM</original>
    <variation>VTNHIFTIKSVRKI</variation>
    <location>
        <begin position="297"/>
        <end position="310"/>
    </location>
</feature>
<feature type="splice variant" id="VSP_037991" description="In isoform 2." evidence="3">
    <location>
        <begin position="311"/>
        <end position="500"/>
    </location>
</feature>
<feature type="sequence conflict" description="In Ref. 4; BAH57246." evidence="4" ref="4">
    <original>G</original>
    <variation>D</variation>
    <location>
        <position position="63"/>
    </location>
</feature>
<feature type="sequence conflict" description="In Ref. 4; BAH57246." evidence="4" ref="4">
    <original>N</original>
    <variation>S</variation>
    <location>
        <position position="283"/>
    </location>
</feature>
<keyword id="KW-0025">Alternative splicing</keyword>
<keyword id="KW-0349">Heme</keyword>
<keyword id="KW-0408">Iron</keyword>
<keyword id="KW-0472">Membrane</keyword>
<keyword id="KW-0479">Metal-binding</keyword>
<keyword id="KW-0503">Monooxygenase</keyword>
<keyword id="KW-0560">Oxidoreductase</keyword>
<keyword id="KW-1185">Reference proteome</keyword>
<keyword id="KW-0812">Transmembrane</keyword>
<keyword id="KW-1133">Transmembrane helix</keyword>
<evidence type="ECO:0000250" key="1"/>
<evidence type="ECO:0000255" key="2"/>
<evidence type="ECO:0000303" key="3">
    <source>
    </source>
</evidence>
<evidence type="ECO:0000305" key="4"/>
<reference key="1">
    <citation type="journal article" date="2000" name="DNA Res.">
        <title>Structural analysis of Arabidopsis thaliana chromosome 3. II. Sequence features of the 4,251,695 bp regions covered by 90 P1, TAC and BAC clones.</title>
        <authorList>
            <person name="Kaneko T."/>
            <person name="Katoh T."/>
            <person name="Sato S."/>
            <person name="Nakamura Y."/>
            <person name="Asamizu E."/>
            <person name="Tabata S."/>
        </authorList>
    </citation>
    <scope>NUCLEOTIDE SEQUENCE [LARGE SCALE GENOMIC DNA]</scope>
    <source>
        <strain>cv. Columbia</strain>
    </source>
</reference>
<reference key="2">
    <citation type="journal article" date="2017" name="Plant J.">
        <title>Araport11: a complete reannotation of the Arabidopsis thaliana reference genome.</title>
        <authorList>
            <person name="Cheng C.Y."/>
            <person name="Krishnakumar V."/>
            <person name="Chan A.P."/>
            <person name="Thibaud-Nissen F."/>
            <person name="Schobel S."/>
            <person name="Town C.D."/>
        </authorList>
    </citation>
    <scope>GENOME REANNOTATION</scope>
    <source>
        <strain>cv. Columbia</strain>
    </source>
</reference>
<reference key="3">
    <citation type="journal article" date="2003" name="Science">
        <title>Empirical analysis of transcriptional activity in the Arabidopsis genome.</title>
        <authorList>
            <person name="Yamada K."/>
            <person name="Lim J."/>
            <person name="Dale J.M."/>
            <person name="Chen H."/>
            <person name="Shinn P."/>
            <person name="Palm C.J."/>
            <person name="Southwick A.M."/>
            <person name="Wu H.C."/>
            <person name="Kim C.J."/>
            <person name="Nguyen M."/>
            <person name="Pham P.K."/>
            <person name="Cheuk R.F."/>
            <person name="Karlin-Newmann G."/>
            <person name="Liu S.X."/>
            <person name="Lam B."/>
            <person name="Sakano H."/>
            <person name="Wu T."/>
            <person name="Yu G."/>
            <person name="Miranda M."/>
            <person name="Quach H.L."/>
            <person name="Tripp M."/>
            <person name="Chang C.H."/>
            <person name="Lee J.M."/>
            <person name="Toriumi M.J."/>
            <person name="Chan M.M."/>
            <person name="Tang C.C."/>
            <person name="Onodera C.S."/>
            <person name="Deng J.M."/>
            <person name="Akiyama K."/>
            <person name="Ansari Y."/>
            <person name="Arakawa T."/>
            <person name="Banh J."/>
            <person name="Banno F."/>
            <person name="Bowser L."/>
            <person name="Brooks S.Y."/>
            <person name="Carninci P."/>
            <person name="Chao Q."/>
            <person name="Choy N."/>
            <person name="Enju A."/>
            <person name="Goldsmith A.D."/>
            <person name="Gurjal M."/>
            <person name="Hansen N.F."/>
            <person name="Hayashizaki Y."/>
            <person name="Johnson-Hopson C."/>
            <person name="Hsuan V.W."/>
            <person name="Iida K."/>
            <person name="Karnes M."/>
            <person name="Khan S."/>
            <person name="Koesema E."/>
            <person name="Ishida J."/>
            <person name="Jiang P.X."/>
            <person name="Jones T."/>
            <person name="Kawai J."/>
            <person name="Kamiya A."/>
            <person name="Meyers C."/>
            <person name="Nakajima M."/>
            <person name="Narusaka M."/>
            <person name="Seki M."/>
            <person name="Sakurai T."/>
            <person name="Satou M."/>
            <person name="Tamse R."/>
            <person name="Vaysberg M."/>
            <person name="Wallender E.K."/>
            <person name="Wong C."/>
            <person name="Yamamura Y."/>
            <person name="Yuan S."/>
            <person name="Shinozaki K."/>
            <person name="Davis R.W."/>
            <person name="Theologis A."/>
            <person name="Ecker J.R."/>
        </authorList>
    </citation>
    <scope>NUCLEOTIDE SEQUENCE [LARGE SCALE MRNA] (ISOFORM 1)</scope>
    <source>
        <strain>cv. Columbia</strain>
    </source>
</reference>
<reference key="4">
    <citation type="journal article" date="2009" name="DNA Res.">
        <title>Analysis of multiple occurrences of alternative splicing events in Arabidopsis thaliana using novel sequenced full-length cDNAs.</title>
        <authorList>
            <person name="Iida K."/>
            <person name="Fukami-Kobayashi K."/>
            <person name="Toyoda A."/>
            <person name="Sakaki Y."/>
            <person name="Kobayashi M."/>
            <person name="Seki M."/>
            <person name="Shinozaki K."/>
        </authorList>
    </citation>
    <scope>NUCLEOTIDE SEQUENCE [LARGE SCALE MRNA] (ISOFORM 2)</scope>
    <source>
        <strain>cv. Columbia</strain>
    </source>
</reference>
<protein>
    <recommendedName>
        <fullName>Cytochrome P450 71B34</fullName>
        <ecNumber>1.14.-.-</ecNumber>
    </recommendedName>
</protein>
<sequence length="500" mass="57139">MTNIWLLSLIFVICILVAVFNHKNRRNYQRTPPSPPGCPIIGNLHQLGELPHQSLWKLSKKYGPVMLLKLGRVPTVIVSSSETAKQALKIHDLHCCSRPGFAGARELSYNYLDIAFSPYDDYWKEVRKLAVQELFSSKQVHSIQPIKDEEVKKLIDSISESAAQKTPINLNKTLLALTVSVVCRTAFSVNFEGTVLNSERFNNIVREALEMLGSFSASDFIPYVGRIIDLLTGLQGRRERSMRDLDAFYEQMFDLHKQKKEEGSEDFVDLLLRLEKEEAVLGNDKLTRNHIKAILMDVLLAGMDTSAITMTWAMAELAKNPRVMKKVQSEIRSQIKNKERISFDDTDKLEYLKMVIKETWRLHPTTPLLIPREAMSEFEINGYTIPVKTRLHVNVWAIGRDPDTWKDPEVFLPERFTDNNIDAKGQHFELLPFGGGRRMCPAVYMGTTMVEFGLANLLYHFDWKLPEGMKVDDIDMEEAPGLTVNKKNELILVPTKFLDP</sequence>
<proteinExistence type="evidence at transcript level"/>
<comment type="cofactor">
    <cofactor evidence="1">
        <name>heme</name>
        <dbReference type="ChEBI" id="CHEBI:30413"/>
    </cofactor>
</comment>
<comment type="subcellular location">
    <subcellularLocation>
        <location evidence="4">Membrane</location>
        <topology evidence="4">Single-pass membrane protein</topology>
    </subcellularLocation>
</comment>
<comment type="alternative products">
    <event type="alternative splicing"/>
    <isoform>
        <id>Q9LIP6-1</id>
        <name>1</name>
        <sequence type="displayed"/>
    </isoform>
    <isoform>
        <id>Q9LIP6-2</id>
        <name>2</name>
        <sequence type="described" ref="VSP_037990 VSP_037991"/>
    </isoform>
</comment>
<comment type="miscellaneous">
    <molecule>Isoform 2</molecule>
    <text evidence="4">May be due to intron retention.</text>
</comment>
<comment type="similarity">
    <text evidence="4">Belongs to the cytochrome P450 family.</text>
</comment>
<dbReference type="EC" id="1.14.-.-"/>
<dbReference type="EMBL" id="AP001298">
    <property type="protein sequence ID" value="BAB02190.1"/>
    <property type="molecule type" value="Genomic_DNA"/>
</dbReference>
<dbReference type="EMBL" id="CP002686">
    <property type="protein sequence ID" value="AEE77143.1"/>
    <property type="molecule type" value="Genomic_DNA"/>
</dbReference>
<dbReference type="EMBL" id="AY139766">
    <property type="status" value="NOT_ANNOTATED_CDS"/>
    <property type="molecule type" value="mRNA"/>
</dbReference>
<dbReference type="EMBL" id="AK319131">
    <property type="protein sequence ID" value="BAH57246.1"/>
    <property type="molecule type" value="mRNA"/>
</dbReference>
<dbReference type="RefSeq" id="NP_189261.1">
    <molecule id="Q9LIP6-1"/>
    <property type="nucleotide sequence ID" value="NM_113537.2"/>
</dbReference>
<dbReference type="SMR" id="Q9LIP6"/>
<dbReference type="FunCoup" id="Q9LIP6">
    <property type="interactions" value="904"/>
</dbReference>
<dbReference type="IntAct" id="Q9LIP6">
    <property type="interactions" value="1"/>
</dbReference>
<dbReference type="STRING" id="3702.Q9LIP6"/>
<dbReference type="PaxDb" id="3702-AT3G26300.1"/>
<dbReference type="ProteomicsDB" id="240303">
    <molecule id="Q9LIP6-1"/>
</dbReference>
<dbReference type="EnsemblPlants" id="AT3G26300.1">
    <molecule id="Q9LIP6-1"/>
    <property type="protein sequence ID" value="AT3G26300.1"/>
    <property type="gene ID" value="AT3G26300"/>
</dbReference>
<dbReference type="GeneID" id="822234"/>
<dbReference type="Gramene" id="AT3G26300.1">
    <molecule id="Q9LIP6-1"/>
    <property type="protein sequence ID" value="AT3G26300.1"/>
    <property type="gene ID" value="AT3G26300"/>
</dbReference>
<dbReference type="KEGG" id="ath:AT3G26300"/>
<dbReference type="Araport" id="AT3G26300"/>
<dbReference type="TAIR" id="AT3G26300">
    <property type="gene designation" value="CYP71B34"/>
</dbReference>
<dbReference type="eggNOG" id="KOG0156">
    <property type="taxonomic scope" value="Eukaryota"/>
</dbReference>
<dbReference type="HOGENOM" id="CLU_001570_4_1_1"/>
<dbReference type="InParanoid" id="Q9LIP6"/>
<dbReference type="OMA" id="WIGHIPM"/>
<dbReference type="PhylomeDB" id="Q9LIP6"/>
<dbReference type="BioCyc" id="ARA:AT3G26300-MONOMER"/>
<dbReference type="PRO" id="PR:Q9LIP6"/>
<dbReference type="Proteomes" id="UP000006548">
    <property type="component" value="Chromosome 3"/>
</dbReference>
<dbReference type="ExpressionAtlas" id="Q9LIP6">
    <property type="expression patterns" value="baseline and differential"/>
</dbReference>
<dbReference type="GO" id="GO:0016020">
    <property type="term" value="C:membrane"/>
    <property type="evidence" value="ECO:0007669"/>
    <property type="project" value="UniProtKB-SubCell"/>
</dbReference>
<dbReference type="GO" id="GO:0020037">
    <property type="term" value="F:heme binding"/>
    <property type="evidence" value="ECO:0007669"/>
    <property type="project" value="InterPro"/>
</dbReference>
<dbReference type="GO" id="GO:0005506">
    <property type="term" value="F:iron ion binding"/>
    <property type="evidence" value="ECO:0007669"/>
    <property type="project" value="InterPro"/>
</dbReference>
<dbReference type="GO" id="GO:0004497">
    <property type="term" value="F:monooxygenase activity"/>
    <property type="evidence" value="ECO:0007669"/>
    <property type="project" value="UniProtKB-KW"/>
</dbReference>
<dbReference type="GO" id="GO:0016705">
    <property type="term" value="F:oxidoreductase activity, acting on paired donors, with incorporation or reduction of molecular oxygen"/>
    <property type="evidence" value="ECO:0007669"/>
    <property type="project" value="InterPro"/>
</dbReference>
<dbReference type="CDD" id="cd11072">
    <property type="entry name" value="CYP71-like"/>
    <property type="match status" value="1"/>
</dbReference>
<dbReference type="FunFam" id="1.10.630.10:FF:000011">
    <property type="entry name" value="Cytochrome P450 83B1"/>
    <property type="match status" value="1"/>
</dbReference>
<dbReference type="Gene3D" id="1.10.630.10">
    <property type="entry name" value="Cytochrome P450"/>
    <property type="match status" value="1"/>
</dbReference>
<dbReference type="InterPro" id="IPR001128">
    <property type="entry name" value="Cyt_P450"/>
</dbReference>
<dbReference type="InterPro" id="IPR017972">
    <property type="entry name" value="Cyt_P450_CS"/>
</dbReference>
<dbReference type="InterPro" id="IPR002401">
    <property type="entry name" value="Cyt_P450_E_grp-I"/>
</dbReference>
<dbReference type="InterPro" id="IPR036396">
    <property type="entry name" value="Cyt_P450_sf"/>
</dbReference>
<dbReference type="PANTHER" id="PTHR47955:SF19">
    <property type="entry name" value="CYTOCHROME P450 71A9-LIKE ISOFORM X1"/>
    <property type="match status" value="1"/>
</dbReference>
<dbReference type="PANTHER" id="PTHR47955">
    <property type="entry name" value="CYTOCHROME P450 FAMILY 71 PROTEIN"/>
    <property type="match status" value="1"/>
</dbReference>
<dbReference type="Pfam" id="PF00067">
    <property type="entry name" value="p450"/>
    <property type="match status" value="1"/>
</dbReference>
<dbReference type="PRINTS" id="PR00463">
    <property type="entry name" value="EP450I"/>
</dbReference>
<dbReference type="PRINTS" id="PR00385">
    <property type="entry name" value="P450"/>
</dbReference>
<dbReference type="SUPFAM" id="SSF48264">
    <property type="entry name" value="Cytochrome P450"/>
    <property type="match status" value="1"/>
</dbReference>
<dbReference type="PROSITE" id="PS00086">
    <property type="entry name" value="CYTOCHROME_P450"/>
    <property type="match status" value="1"/>
</dbReference>
<accession>Q9LIP6</accession>
<accession>C0Z3G7</accession>
<name>C71BV_ARATH</name>